<proteinExistence type="evidence at transcript level"/>
<gene>
    <name evidence="7" type="primary">CYP4</name>
    <name type="ORF">MGG_08378</name>
</gene>
<feature type="chain" id="PRO_0000449439" description="Cytochrome P450 monooxygenase CYP4">
    <location>
        <begin position="1"/>
        <end position="534"/>
    </location>
</feature>
<feature type="transmembrane region" description="Helical" evidence="2">
    <location>
        <begin position="46"/>
        <end position="66"/>
    </location>
</feature>
<feature type="binding site" description="axial binding residue" evidence="1">
    <location>
        <position position="477"/>
    </location>
    <ligand>
        <name>heme</name>
        <dbReference type="ChEBI" id="CHEBI:30413"/>
    </ligand>
    <ligandPart>
        <name>Fe</name>
        <dbReference type="ChEBI" id="CHEBI:18248"/>
    </ligandPart>
</feature>
<feature type="glycosylation site" description="N-linked (GlcNAc...) asparagine" evidence="3">
    <location>
        <position position="220"/>
    </location>
</feature>
<feature type="glycosylation site" description="N-linked (GlcNAc...) asparagine" evidence="3">
    <location>
        <position position="515"/>
    </location>
</feature>
<accession>G4MWB3</accession>
<evidence type="ECO:0000250" key="1">
    <source>
        <dbReference type="UniProtKB" id="P04798"/>
    </source>
</evidence>
<evidence type="ECO:0000255" key="2"/>
<evidence type="ECO:0000255" key="3">
    <source>
        <dbReference type="PROSITE-ProRule" id="PRU00498"/>
    </source>
</evidence>
<evidence type="ECO:0000269" key="4">
    <source>
    </source>
</evidence>
<evidence type="ECO:0000269" key="5">
    <source>
    </source>
</evidence>
<evidence type="ECO:0000269" key="6">
    <source>
    </source>
</evidence>
<evidence type="ECO:0000303" key="7">
    <source>
    </source>
</evidence>
<evidence type="ECO:0000303" key="8">
    <source>
    </source>
</evidence>
<evidence type="ECO:0000305" key="9"/>
<evidence type="ECO:0000305" key="10">
    <source>
    </source>
</evidence>
<evidence type="ECO:0000305" key="11">
    <source>
    </source>
</evidence>
<comment type="function">
    <text evidence="4 5 6 10 11">Cytochrome P450 monooxygenase; part of the gene cluster that mediates the biosynthesis of a tyrosine-derived cytochalasan acting as a fungal signal recognized by resistant rice plants and leads to avirulence in Pi33 resistant rice cultivars (PubMed:18433432). The first step in the pathway is catalyzed by the hybrid PKS-NRPS ACE1, assisted by the enoyl reductase RAP1, that are responsible for fusion of the tyrosine precursor and the polyketide backbone (PubMed:29142718). The polyketide synthase module (PKS) of ACE1 is responsible for the synthesis of the polyketide backbone and the downstream nonribosomal peptide synthetase (NRPS) amidates the carboxyl end of the polyketide with the tyrosine precursor (PubMed:29142718). Because ACE1 lacks a designated enoylreductase (ER) domain, the required activity is provided the enoyl reductase RAP1 (PubMed:29142718). Reduction by the hydrolyase ORFZ, followed by dehydration and intra-molecular Diels-Alder cyclization by the Diels-Alderase ORF3 then yield the required isoindolone-fused macrocycle (Probable). A number of oxidative steps catalyzed by the tailoring enzymes identified within the cluster, including cytochrome P450 monooxygenases CYP1 to CYP4, the FAD-linked oxidoreductase OXR2 and the short-chain dehydrogenase/reductase OXR1, are further required to afford the final cytochalasans that confer avirulence and which have still to be identified (Probable). The monooxygenase CYP1 has been shown to be a site-selective C-18 hydroxylase whereas the function of CYP3 is the site-selective epoxidation of the C-6/C-7 olefin that is present in some intermediate compounds (PubMed:31644300). Finally, SYN2 and RAP2 are not required for avirulence in Pi33 resistant rice cultivars (PubMed:18433432).</text>
</comment>
<comment type="cofactor">
    <cofactor evidence="1">
        <name>heme</name>
        <dbReference type="ChEBI" id="CHEBI:30413"/>
    </cofactor>
</comment>
<comment type="pathway">
    <text evidence="10">Secondary metabolite biosynthesis.</text>
</comment>
<comment type="subcellular location">
    <subcellularLocation>
        <location evidence="2">Membrane</location>
        <topology evidence="2">Single-pass membrane protein</topology>
    </subcellularLocation>
</comment>
<comment type="induction">
    <text evidence="4">Expressed exclusively during fungal penetration of host leaves, the time point at which plant defense reactions are triggered.</text>
</comment>
<comment type="similarity">
    <text evidence="9">Belongs to the cytochrome P450 family.</text>
</comment>
<protein>
    <recommendedName>
        <fullName evidence="7">Cytochrome P450 monooxygenase CYP4</fullName>
        <ecNumber evidence="10">1.-.-.-</ecNumber>
    </recommendedName>
    <alternativeName>
        <fullName evidence="8">ACE1 cytochalasan biosynthesis cluster protein CYP4</fullName>
    </alternativeName>
</protein>
<organism>
    <name type="scientific">Pyricularia oryzae (strain 70-15 / ATCC MYA-4617 / FGSC 8958)</name>
    <name type="common">Rice blast fungus</name>
    <name type="synonym">Magnaporthe oryzae</name>
    <dbReference type="NCBI Taxonomy" id="242507"/>
    <lineage>
        <taxon>Eukaryota</taxon>
        <taxon>Fungi</taxon>
        <taxon>Dikarya</taxon>
        <taxon>Ascomycota</taxon>
        <taxon>Pezizomycotina</taxon>
        <taxon>Sordariomycetes</taxon>
        <taxon>Sordariomycetidae</taxon>
        <taxon>Magnaporthales</taxon>
        <taxon>Pyriculariaceae</taxon>
        <taxon>Pyricularia</taxon>
    </lineage>
</organism>
<dbReference type="EC" id="1.-.-.-" evidence="10"/>
<dbReference type="EMBL" id="CM001232">
    <property type="protein sequence ID" value="EHA55873.1"/>
    <property type="molecule type" value="Genomic_DNA"/>
</dbReference>
<dbReference type="RefSeq" id="XP_003715680.1">
    <property type="nucleotide sequence ID" value="XM_003715632.1"/>
</dbReference>
<dbReference type="SMR" id="G4MWB3"/>
<dbReference type="GlyCosmos" id="G4MWB3">
    <property type="glycosylation" value="2 sites, No reported glycans"/>
</dbReference>
<dbReference type="EnsemblFungi" id="MGG_08378T0">
    <property type="protein sequence ID" value="MGG_08378T0"/>
    <property type="gene ID" value="MGG_08378"/>
</dbReference>
<dbReference type="GeneID" id="2678570"/>
<dbReference type="KEGG" id="mgr:MGG_08378"/>
<dbReference type="VEuPathDB" id="FungiDB:MGG_08378"/>
<dbReference type="eggNOG" id="KOG0158">
    <property type="taxonomic scope" value="Eukaryota"/>
</dbReference>
<dbReference type="HOGENOM" id="CLU_022195_0_2_1"/>
<dbReference type="InParanoid" id="G4MWB3"/>
<dbReference type="OMA" id="KMTPLAN"/>
<dbReference type="OrthoDB" id="1844152at2759"/>
<dbReference type="Proteomes" id="UP000009058">
    <property type="component" value="Chromosome 2"/>
</dbReference>
<dbReference type="GO" id="GO:0016020">
    <property type="term" value="C:membrane"/>
    <property type="evidence" value="ECO:0007669"/>
    <property type="project" value="UniProtKB-SubCell"/>
</dbReference>
<dbReference type="GO" id="GO:0020037">
    <property type="term" value="F:heme binding"/>
    <property type="evidence" value="ECO:0000317"/>
    <property type="project" value="PAMGO_MGG"/>
</dbReference>
<dbReference type="GO" id="GO:0005506">
    <property type="term" value="F:iron ion binding"/>
    <property type="evidence" value="ECO:0000317"/>
    <property type="project" value="PAMGO_MGG"/>
</dbReference>
<dbReference type="GO" id="GO:0004497">
    <property type="term" value="F:monooxygenase activity"/>
    <property type="evidence" value="ECO:0000317"/>
    <property type="project" value="PAMGO_MGG"/>
</dbReference>
<dbReference type="GO" id="GO:0016705">
    <property type="term" value="F:oxidoreductase activity, acting on paired donors, with incorporation or reduction of molecular oxygen"/>
    <property type="evidence" value="ECO:0007669"/>
    <property type="project" value="InterPro"/>
</dbReference>
<dbReference type="GO" id="GO:0019748">
    <property type="term" value="P:secondary metabolic process"/>
    <property type="evidence" value="ECO:0007669"/>
    <property type="project" value="UniProtKB-ARBA"/>
</dbReference>
<dbReference type="CDD" id="cd11041">
    <property type="entry name" value="CYP503A1-like"/>
    <property type="match status" value="1"/>
</dbReference>
<dbReference type="Gene3D" id="1.10.630.10">
    <property type="entry name" value="Cytochrome P450"/>
    <property type="match status" value="1"/>
</dbReference>
<dbReference type="InterPro" id="IPR001128">
    <property type="entry name" value="Cyt_P450"/>
</dbReference>
<dbReference type="InterPro" id="IPR002403">
    <property type="entry name" value="Cyt_P450_E_grp-IV"/>
</dbReference>
<dbReference type="InterPro" id="IPR036396">
    <property type="entry name" value="Cyt_P450_sf"/>
</dbReference>
<dbReference type="PANTHER" id="PTHR46206">
    <property type="entry name" value="CYTOCHROME P450"/>
    <property type="match status" value="1"/>
</dbReference>
<dbReference type="PANTHER" id="PTHR46206:SF6">
    <property type="entry name" value="CYTOCHROME P450 MONOOXYGENASE AN1598-RELATED"/>
    <property type="match status" value="1"/>
</dbReference>
<dbReference type="Pfam" id="PF00067">
    <property type="entry name" value="p450"/>
    <property type="match status" value="1"/>
</dbReference>
<dbReference type="PRINTS" id="PR00465">
    <property type="entry name" value="EP450IV"/>
</dbReference>
<dbReference type="SUPFAM" id="SSF48264">
    <property type="entry name" value="Cytochrome P450"/>
    <property type="match status" value="1"/>
</dbReference>
<keyword id="KW-0325">Glycoprotein</keyword>
<keyword id="KW-0349">Heme</keyword>
<keyword id="KW-0408">Iron</keyword>
<keyword id="KW-0472">Membrane</keyword>
<keyword id="KW-0479">Metal-binding</keyword>
<keyword id="KW-0503">Monooxygenase</keyword>
<keyword id="KW-0560">Oxidoreductase</keyword>
<keyword id="KW-1185">Reference proteome</keyword>
<keyword id="KW-0812">Transmembrane</keyword>
<keyword id="KW-1133">Transmembrane helix</keyword>
<sequence>MLSLLETKIIEPFMVVRQTLAPLRLSRWQIFKHMTRILIFSSNTRTIIFCVLMSLVGYIVSRIIWGRQEKYPDHGLPIVKTNDYHFDNIVAEGKRLYPNQAFMGINKRYKFVIYPSSSWEELKRIPEQTASIMDFQHVCNSGEWSLVGGETHELVKTITAELTRSLPARVPNRQQDAKMTFDTIIGHCPEEKGFNLLMTSLEIIAKINACTFVGRELGANKSWVTAVVYSPLWVYFAVTLCNATPDILRPLLRPLFFLPALRNYWNMQKLLKPKLDREMETFRQTDDKRKLLVPKSDQDLPFTHFLLSRYTEAAATIKQLVIDYIQVSYTSTPTTASALFHALWELAQHPEAAEVMRRELATVMIDGNLPKTHLQELKRMDSFLRESFRLHPITRFTLQRYVKEPFQLSDGSRIPPGVMAVVDAQEINRSPEIWENPDEFDMDRFYRLREISGNDNRYHFVTTSSNSPGWGDGTQACPGRFFATSTLKIVMAHIVMNYDVSLRKVAPLKSQPLVNGSYSPDDSVEIFFKSRNVE</sequence>
<name>CYP4B_PYRO7</name>
<reference key="1">
    <citation type="journal article" date="2005" name="Nature">
        <title>The genome sequence of the rice blast fungus Magnaporthe grisea.</title>
        <authorList>
            <person name="Dean R.A."/>
            <person name="Talbot N.J."/>
            <person name="Ebbole D.J."/>
            <person name="Farman M.L."/>
            <person name="Mitchell T.K."/>
            <person name="Orbach M.J."/>
            <person name="Thon M.R."/>
            <person name="Kulkarni R."/>
            <person name="Xu J.-R."/>
            <person name="Pan H."/>
            <person name="Read N.D."/>
            <person name="Lee Y.-H."/>
            <person name="Carbone I."/>
            <person name="Brown D."/>
            <person name="Oh Y.Y."/>
            <person name="Donofrio N."/>
            <person name="Jeong J.S."/>
            <person name="Soanes D.M."/>
            <person name="Djonovic S."/>
            <person name="Kolomiets E."/>
            <person name="Rehmeyer C."/>
            <person name="Li W."/>
            <person name="Harding M."/>
            <person name="Kim S."/>
            <person name="Lebrun M.-H."/>
            <person name="Bohnert H."/>
            <person name="Coughlan S."/>
            <person name="Butler J."/>
            <person name="Calvo S.E."/>
            <person name="Ma L.-J."/>
            <person name="Nicol R."/>
            <person name="Purcell S."/>
            <person name="Nusbaum C."/>
            <person name="Galagan J.E."/>
            <person name="Birren B.W."/>
        </authorList>
    </citation>
    <scope>NUCLEOTIDE SEQUENCE [LARGE SCALE GENOMIC DNA]</scope>
    <source>
        <strain>70-15 / ATCC MYA-4617 / FGSC 8958</strain>
    </source>
</reference>
<reference key="2">
    <citation type="journal article" date="2008" name="New Phytol.">
        <title>Magnaporthe grisea avirulence gene ACE1 belongs to an infection-specific gene cluster involved in secondary metabolism.</title>
        <authorList>
            <person name="Collemare J."/>
            <person name="Pianfetti M."/>
            <person name="Houlle A.E."/>
            <person name="Morin D."/>
            <person name="Camborde L."/>
            <person name="Gagey M.J."/>
            <person name="Barbisan C."/>
            <person name="Fudal I."/>
            <person name="Lebrun M.H."/>
            <person name="Boehnert H.U."/>
        </authorList>
    </citation>
    <scope>FUNCTION</scope>
    <scope>INDUCTION</scope>
    <scope>PATHWAY</scope>
</reference>
<reference key="3">
    <citation type="journal article" date="2015" name="Chem. Sci.">
        <title>Heterologous expression of the avirulence gene ACE1 from the fungal rice pathogen Magnaporthe oryzae.</title>
        <authorList>
            <person name="Song Z."/>
            <person name="Bakeer W."/>
            <person name="Marshall J.W."/>
            <person name="Yakasai A.A."/>
            <person name="Khalid R.M."/>
            <person name="Collemare J."/>
            <person name="Skellam E."/>
            <person name="Tharreau D."/>
            <person name="Lebrun M.H."/>
            <person name="Lazarus C.M."/>
            <person name="Bailey A.M."/>
            <person name="Simpson T.J."/>
            <person name="Cox R.J."/>
        </authorList>
    </citation>
    <scope>FUNCTION</scope>
</reference>
<reference key="4">
    <citation type="journal article" date="2019" name="Org. Lett.">
        <title>Investigating the function of cryptic cytochalasan cytochrome P450 monooxygenases using combinatorial biosynthesis.</title>
        <authorList>
            <person name="Wang C."/>
            <person name="Becker K."/>
            <person name="Pfuetze S."/>
            <person name="Kuhnert E."/>
            <person name="Stadler M."/>
            <person name="Cox R.J."/>
            <person name="Skellam E."/>
        </authorList>
    </citation>
    <scope>FUNCTION</scope>
</reference>